<keyword id="KW-0007">Acetylation</keyword>
<keyword id="KW-0025">Alternative splicing</keyword>
<keyword id="KW-0175">Coiled coil</keyword>
<keyword id="KW-0903">Direct protein sequencing</keyword>
<keyword id="KW-0325">Glycoprotein</keyword>
<keyword id="KW-0403">Intermediate filament</keyword>
<keyword id="KW-1017">Isopeptide bond</keyword>
<keyword id="KW-0449">Lipoprotein</keyword>
<keyword id="KW-0488">Methylation</keyword>
<keyword id="KW-0539">Nucleus</keyword>
<keyword id="KW-0597">Phosphoprotein</keyword>
<keyword id="KW-0636">Prenylation</keyword>
<keyword id="KW-1185">Reference proteome</keyword>
<keyword id="KW-0832">Ubl conjugation</keyword>
<sequence length="596" mass="67318">MASLPPHAGPATPLSPTRLSRLQEKEELRELNDRLAHYIDRVRALELENDRLLLRISEKEEVTTREVSGIKTLYESELADARRVLDETARERARLQIEIGKVQAELEEARKSAKKREGELTVAQGRVKDLESLFHRSEAELATALSDKQGLETEVAELRAQLAKAEDGHAVAKKQLEKETLMRVDLENRCQSLQEELAFSKSVFEEEVRETRRRHERRLVEVDSSRQQEYDFKMAQALEDLRSQHDEQVRLYRVELEQTYQAKLDNAKLLSDQNDKAAHAAREELKEARMRVESLSYQLLGLQKQASAAENHIHELEEALAGERDKFRKMLDAKEQEMTEVRDAMQQQLAEYQELLDIKLALDMEISAYRKLLEGEEERLKLSPSPSSRITISRATSSSSSSSGVGMSVGQGRGKRRRLETEDTSGSPSRASRVSSGSRLAQQTVATGVVNIDEVDPEGRFVRLKNSSDKDQSLGNWRIKRQVLEGEDIAYKFTPKYVLRAGQTVTVWAAGAGATHSPPSTLVWKSQTNWGPGESFRTALVSADGEEVAVKAAKHSSVQGRENGEEEEEEEAEFGEEDLFHQQGDPRTTSRGCRLM</sequence>
<comment type="function">
    <text evidence="9">Lamins are intermediate filament proteins that assemble into a filamentous meshwork, and which constitute the major components of the nuclear lamina, a fibrous layer on the nucleoplasmic side of the inner nuclear membrane (PubMed:28241138). Lamins provide a framework for the nuclear envelope, bridging the nuclear envelope and chromatin, thereby playing an important role in nuclear assembly, chromatin organization, nuclear membrane and telomere dynamics (PubMed:28241138). The structural integrity of the lamina is strictly controlled by the cell cycle, as seen by the disintegration and formation of the nuclear envelope in prophase and telophase, respectively (PubMed:28241138).</text>
</comment>
<comment type="subunit">
    <text evidence="8 9">Dimer (PubMed:28241138). Lamin dimers then assemble into dimeric head-to-tail polymers (PubMed:28241138). Ultimately, two head-to-tail polymers assemble laterally into a protofilament with a uniformly shaped rod of 3.5 nm in diameter (PubMed:28241138). Interacts with TMEM43 (PubMed:18230648).</text>
</comment>
<comment type="subcellular location">
    <subcellularLocation>
        <location evidence="9">Nucleus lamina</location>
    </subcellularLocation>
</comment>
<comment type="alternative products">
    <event type="alternative splicing"/>
    <isoform>
        <id>P21619-1</id>
        <name>B2</name>
        <sequence type="displayed"/>
    </isoform>
    <isoform>
        <id>P21619-2</id>
        <id>P48680-1</id>
        <name>B3</name>
        <sequence type="described" ref="VSP_017070"/>
    </isoform>
</comment>
<comment type="tissue specificity">
    <molecule>Isoform B3</molecule>
    <text evidence="10">Germ cell-specific.</text>
</comment>
<comment type="PTM">
    <text evidence="2">B-type lamins undergo a series of modifications, such as farnesylation and phosphorylation. Increased phosphorylation of the lamins occurs before envelope disintegration and probably plays a role in regulating lamin associations.</text>
</comment>
<comment type="PTM">
    <text evidence="1">Phosphorylation plays a key role in lamin organization, subcellular localization and nuclear envelope disintegration (By similarity). Phosphorylation by CDK1 at Ser-15 and Ser-385 at the onset of mitosis drives lamin disassembly and nuclear envelope breakdown (By similarity).</text>
</comment>
<comment type="similarity">
    <text evidence="6">Belongs to the intermediate filament family.</text>
</comment>
<comment type="sequence caution" evidence="12">
    <conflict type="erroneous initiation">
        <sequence resource="EMBL-CDS" id="AAH42430"/>
    </conflict>
    <text>Extended N-terminus.</text>
</comment>
<comment type="sequence caution" evidence="12">
    <conflict type="erroneous initiation">
        <sequence resource="EMBL-CDS" id="AAH51985"/>
    </conflict>
    <text>Extended N-terminus.</text>
</comment>
<organism>
    <name type="scientific">Mus musculus</name>
    <name type="common">Mouse</name>
    <dbReference type="NCBI Taxonomy" id="10090"/>
    <lineage>
        <taxon>Eukaryota</taxon>
        <taxon>Metazoa</taxon>
        <taxon>Chordata</taxon>
        <taxon>Craniata</taxon>
        <taxon>Vertebrata</taxon>
        <taxon>Euteleostomi</taxon>
        <taxon>Mammalia</taxon>
        <taxon>Eutheria</taxon>
        <taxon>Euarchontoglires</taxon>
        <taxon>Glires</taxon>
        <taxon>Rodentia</taxon>
        <taxon>Myomorpha</taxon>
        <taxon>Muroidea</taxon>
        <taxon>Muridae</taxon>
        <taxon>Murinae</taxon>
        <taxon>Mus</taxon>
        <taxon>Mus</taxon>
    </lineage>
</organism>
<protein>
    <recommendedName>
        <fullName>Lamin-B2</fullName>
    </recommendedName>
</protein>
<reference key="1">
    <citation type="journal article" date="1990" name="Chromosoma">
        <title>Characterization of a second highly conserved B-type lamin present in cells previously thought to contain only a single B-type lamin.</title>
        <authorList>
            <person name="Hoeger T.H."/>
            <person name="Zatloukal K."/>
            <person name="Waizenegger I."/>
            <person name="Krohne G."/>
        </authorList>
    </citation>
    <scope>NUCLEOTIDE SEQUENCE [MRNA] (ISOFORM B2)</scope>
</reference>
<reference key="2">
    <citation type="journal article" date="1990" name="Chromosoma">
        <authorList>
            <person name="Hoeger T.H."/>
            <person name="Zatloukal K."/>
            <person name="Waizenegger I."/>
            <person name="Krohne G."/>
        </authorList>
    </citation>
    <scope>ERRATUM OF PUBMED:2102682</scope>
</reference>
<reference key="3">
    <citation type="journal article" date="1993" name="EMBO J.">
        <title>cDNA cloning of a germ cell specific lamin B3 from mouse spermatocytes and analysis of its function by ectopic expression in somatic cells.</title>
        <authorList>
            <person name="Furukawa K."/>
            <person name="Hotta Y."/>
        </authorList>
    </citation>
    <scope>NUCLEOTIDE SEQUENCE [MRNA] (ISOFORM B3)</scope>
    <scope>DEVELOPMENTAL STAGE</scope>
</reference>
<reference key="4">
    <citation type="journal article" date="2004" name="Genome Res.">
        <title>The status, quality, and expansion of the NIH full-length cDNA project: the Mammalian Gene Collection (MGC).</title>
        <authorList>
            <consortium name="The MGC Project Team"/>
        </authorList>
    </citation>
    <scope>NUCLEOTIDE SEQUENCE [LARGE SCALE MRNA] (ISOFORM B2)</scope>
    <source>
        <strain>C57BL/6J</strain>
        <strain>FVB/N</strain>
        <tissue>Brain</tissue>
        <tissue>Mammary tumor</tissue>
    </source>
</reference>
<reference key="5">
    <citation type="journal article" date="1991" name="J. Biol. Chem.">
        <title>Identification of lamin B2 as a substrate of protein kinase C in BALB/MK-2 mouse keratinocytes.</title>
        <authorList>
            <person name="Kasahara K."/>
            <person name="Chida K."/>
            <person name="Tsunenaga M."/>
            <person name="Kohno Y."/>
            <person name="Ikuta T."/>
            <person name="Kuroki T."/>
        </authorList>
    </citation>
    <scope>PROTEIN SEQUENCE OF 165-172; 254-262 AND 482-491</scope>
</reference>
<reference key="6">
    <citation type="journal article" date="1990" name="FEBS Lett.">
        <title>Protein chemical analysis of purified murine lamin B identifies two distinct polypeptides B1 and B2.</title>
        <authorList>
            <person name="Weber K."/>
            <person name="Plessmann U."/>
            <person name="Traub P."/>
        </authorList>
    </citation>
    <scope>PROTEIN SEQUENCE OF 182-206; 234-286; 290-319; 364-401 AND 470-496</scope>
</reference>
<reference key="7">
    <citation type="journal article" date="2006" name="Mol. Cell. Proteomics">
        <title>Comprehensive identification of phosphorylation sites in postsynaptic density preparations.</title>
        <authorList>
            <person name="Trinidad J.C."/>
            <person name="Specht C.G."/>
            <person name="Thalhammer A."/>
            <person name="Schoepfer R."/>
            <person name="Burlingame A.L."/>
        </authorList>
    </citation>
    <scope>IDENTIFICATION BY MASS SPECTROMETRY [LARGE SCALE ANALYSIS]</scope>
    <source>
        <tissue>Brain</tissue>
    </source>
</reference>
<reference key="8">
    <citation type="journal article" date="2008" name="J. Cell Sci.">
        <title>LUMA interacts with emerin and influences its distribution at the inner nuclear membrane.</title>
        <authorList>
            <person name="Bengtsson L."/>
            <person name="Otto H."/>
        </authorList>
    </citation>
    <scope>INTERACTION WITH TMEM43</scope>
</reference>
<reference key="9">
    <citation type="journal article" date="2010" name="Cell">
        <title>A tissue-specific atlas of mouse protein phosphorylation and expression.</title>
        <authorList>
            <person name="Huttlin E.L."/>
            <person name="Jedrychowski M.P."/>
            <person name="Elias J.E."/>
            <person name="Goswami T."/>
            <person name="Rad R."/>
            <person name="Beausoleil S.A."/>
            <person name="Villen J."/>
            <person name="Haas W."/>
            <person name="Sowa M.E."/>
            <person name="Gygi S.P."/>
        </authorList>
    </citation>
    <scope>IDENTIFICATION BY MASS SPECTROMETRY [LARGE SCALE ANALYSIS]</scope>
    <source>
        <tissue>Pancreas</tissue>
        <tissue>Spleen</tissue>
    </source>
</reference>
<reference key="10">
    <citation type="journal article" date="2014" name="Mol. Cell. Proteomics">
        <title>Immunoaffinity enrichment and mass spectrometry analysis of protein methylation.</title>
        <authorList>
            <person name="Guo A."/>
            <person name="Gu H."/>
            <person name="Zhou J."/>
            <person name="Mulhern D."/>
            <person name="Wang Y."/>
            <person name="Lee K.A."/>
            <person name="Yang V."/>
            <person name="Aguiar M."/>
            <person name="Kornhauser J."/>
            <person name="Jia X."/>
            <person name="Ren J."/>
            <person name="Beausoleil S.A."/>
            <person name="Silva J.C."/>
            <person name="Vemulapalli V."/>
            <person name="Bedford M.T."/>
            <person name="Comb M.J."/>
        </authorList>
    </citation>
    <scope>METHYLATION [LARGE SCALE ANALYSIS] AT ARG-413</scope>
    <scope>IDENTIFICATION BY MASS SPECTROMETRY [LARGE SCALE ANALYSIS]</scope>
    <source>
        <tissue>Brain</tissue>
    </source>
</reference>
<reference key="11">
    <citation type="journal article" date="2017" name="Nature">
        <title>The molecular architecture of lamins in somatic cells.</title>
        <authorList>
            <person name="Turgay Y."/>
            <person name="Eibauer M."/>
            <person name="Goldman A.E."/>
            <person name="Shimi T."/>
            <person name="Khayat M."/>
            <person name="Ben-Harush K."/>
            <person name="Dubrovsky-Gaupp A."/>
            <person name="Sapra K.T."/>
            <person name="Goldman R.D."/>
            <person name="Medalia O."/>
        </authorList>
    </citation>
    <scope>FUNCTION</scope>
    <scope>SUBCELLULAR LOCATION</scope>
    <scope>SUBUNIT</scope>
</reference>
<name>LMNB2_MOUSE</name>
<dbReference type="EMBL" id="X54098">
    <property type="protein sequence ID" value="CAA38032.1"/>
    <property type="molecule type" value="mRNA"/>
</dbReference>
<dbReference type="EMBL" id="D13455">
    <property type="protein sequence ID" value="BAA02708.1"/>
    <property type="molecule type" value="mRNA"/>
</dbReference>
<dbReference type="EMBL" id="BC042430">
    <property type="protein sequence ID" value="AAH42430.1"/>
    <property type="status" value="ALT_INIT"/>
    <property type="molecule type" value="mRNA"/>
</dbReference>
<dbReference type="EMBL" id="BC051985">
    <property type="protein sequence ID" value="AAH51985.1"/>
    <property type="status" value="ALT_INIT"/>
    <property type="molecule type" value="mRNA"/>
</dbReference>
<dbReference type="CCDS" id="CCDS83733.1">
    <molecule id="P21619-2"/>
</dbReference>
<dbReference type="PIR" id="B48315">
    <property type="entry name" value="B48315"/>
</dbReference>
<dbReference type="PIR" id="S28419">
    <property type="entry name" value="S28419"/>
</dbReference>
<dbReference type="RefSeq" id="NP_001334069.1">
    <molecule id="P21619-2"/>
    <property type="nucleotide sequence ID" value="NM_001347140.1"/>
</dbReference>
<dbReference type="RefSeq" id="NP_034852.2">
    <property type="nucleotide sequence ID" value="NM_010722.5"/>
</dbReference>
<dbReference type="SMR" id="P21619"/>
<dbReference type="BioGRID" id="201178">
    <property type="interactions" value="12"/>
</dbReference>
<dbReference type="FunCoup" id="P21619">
    <property type="interactions" value="3078"/>
</dbReference>
<dbReference type="IntAct" id="P21619">
    <property type="interactions" value="4"/>
</dbReference>
<dbReference type="MINT" id="P21619"/>
<dbReference type="STRING" id="10090.ENSMUSP00000136524"/>
<dbReference type="GlyGen" id="P21619">
    <property type="glycosylation" value="1 site"/>
</dbReference>
<dbReference type="iPTMnet" id="P21619"/>
<dbReference type="PhosphoSitePlus" id="P21619"/>
<dbReference type="jPOST" id="P21619"/>
<dbReference type="PaxDb" id="10090-ENSMUSP00000057291"/>
<dbReference type="PeptideAtlas" id="P21619"/>
<dbReference type="ProteomicsDB" id="286221">
    <molecule id="P21619-1"/>
</dbReference>
<dbReference type="ProteomicsDB" id="286222">
    <molecule id="P21619-2"/>
</dbReference>
<dbReference type="Pumba" id="P21619"/>
<dbReference type="Antibodypedia" id="10783">
    <property type="antibodies" value="361 antibodies from 38 providers"/>
</dbReference>
<dbReference type="DNASU" id="16907"/>
<dbReference type="Ensembl" id="ENSMUST00000105332.3">
    <molecule id="P21619-2"/>
    <property type="protein sequence ID" value="ENSMUSP00000100969.3"/>
    <property type="gene ID" value="ENSMUSG00000062075.14"/>
</dbReference>
<dbReference type="Ensembl" id="ENSMUST00000179022.8">
    <molecule id="P21619-1"/>
    <property type="protein sequence ID" value="ENSMUSP00000136524.2"/>
    <property type="gene ID" value="ENSMUSG00000062075.14"/>
</dbReference>
<dbReference type="GeneID" id="16907"/>
<dbReference type="KEGG" id="mmu:16907"/>
<dbReference type="UCSC" id="uc007gfk.1">
    <molecule id="P21619-1"/>
    <property type="organism name" value="mouse"/>
</dbReference>
<dbReference type="AGR" id="MGI:96796"/>
<dbReference type="CTD" id="84823"/>
<dbReference type="MGI" id="MGI:96796">
    <property type="gene designation" value="Lmnb2"/>
</dbReference>
<dbReference type="VEuPathDB" id="HostDB:ENSMUSG00000062075"/>
<dbReference type="eggNOG" id="KOG0977">
    <property type="taxonomic scope" value="Eukaryota"/>
</dbReference>
<dbReference type="GeneTree" id="ENSGT00940000160274"/>
<dbReference type="HOGENOM" id="CLU_012560_9_2_1"/>
<dbReference type="InParanoid" id="P21619"/>
<dbReference type="PhylomeDB" id="P21619"/>
<dbReference type="TreeFam" id="TF101181"/>
<dbReference type="BioGRID-ORCS" id="16907">
    <property type="hits" value="1 hit in 78 CRISPR screens"/>
</dbReference>
<dbReference type="ChiTaRS" id="Lmnb2">
    <property type="organism name" value="mouse"/>
</dbReference>
<dbReference type="PRO" id="PR:P21619"/>
<dbReference type="Proteomes" id="UP000000589">
    <property type="component" value="Chromosome 10"/>
</dbReference>
<dbReference type="RNAct" id="P21619">
    <property type="molecule type" value="protein"/>
</dbReference>
<dbReference type="Bgee" id="ENSMUSG00000062075">
    <property type="expression patterns" value="Expressed in spermatid and 173 other cell types or tissues"/>
</dbReference>
<dbReference type="ExpressionAtlas" id="P21619">
    <property type="expression patterns" value="baseline and differential"/>
</dbReference>
<dbReference type="GO" id="GO:0005638">
    <property type="term" value="C:lamin filament"/>
    <property type="evidence" value="ECO:0000314"/>
    <property type="project" value="MGI"/>
</dbReference>
<dbReference type="GO" id="GO:0005635">
    <property type="term" value="C:nuclear envelope"/>
    <property type="evidence" value="ECO:0000314"/>
    <property type="project" value="MGI"/>
</dbReference>
<dbReference type="GO" id="GO:0005652">
    <property type="term" value="C:nuclear lamina"/>
    <property type="evidence" value="ECO:0000314"/>
    <property type="project" value="UniProtKB"/>
</dbReference>
<dbReference type="GO" id="GO:0034399">
    <property type="term" value="C:nuclear periphery"/>
    <property type="evidence" value="ECO:0000314"/>
    <property type="project" value="MGI"/>
</dbReference>
<dbReference type="GO" id="GO:0005634">
    <property type="term" value="C:nucleus"/>
    <property type="evidence" value="ECO:0000314"/>
    <property type="project" value="MGI"/>
</dbReference>
<dbReference type="GO" id="GO:0005200">
    <property type="term" value="F:structural constituent of cytoskeleton"/>
    <property type="evidence" value="ECO:0000314"/>
    <property type="project" value="UniProtKB"/>
</dbReference>
<dbReference type="FunFam" id="1.20.5.170:FF:000076">
    <property type="entry name" value="Lamin B2"/>
    <property type="match status" value="1"/>
</dbReference>
<dbReference type="Gene3D" id="1.20.5.170">
    <property type="match status" value="1"/>
</dbReference>
<dbReference type="Gene3D" id="2.60.40.1260">
    <property type="entry name" value="Lamin Tail domain"/>
    <property type="match status" value="1"/>
</dbReference>
<dbReference type="Gene3D" id="1.20.5.1160">
    <property type="entry name" value="Vasodilator-stimulated phosphoprotein"/>
    <property type="match status" value="1"/>
</dbReference>
<dbReference type="InterPro" id="IPR018039">
    <property type="entry name" value="IF_conserved"/>
</dbReference>
<dbReference type="InterPro" id="IPR039008">
    <property type="entry name" value="IF_rod_dom"/>
</dbReference>
<dbReference type="InterPro" id="IPR001322">
    <property type="entry name" value="Lamin_tail_dom"/>
</dbReference>
<dbReference type="InterPro" id="IPR036415">
    <property type="entry name" value="Lamin_tail_dom_sf"/>
</dbReference>
<dbReference type="PANTHER" id="PTHR45721">
    <property type="entry name" value="LAMIN DM0-RELATED"/>
    <property type="match status" value="1"/>
</dbReference>
<dbReference type="PANTHER" id="PTHR45721:SF2">
    <property type="entry name" value="LAMIN-B2"/>
    <property type="match status" value="1"/>
</dbReference>
<dbReference type="Pfam" id="PF00038">
    <property type="entry name" value="Filament"/>
    <property type="match status" value="1"/>
</dbReference>
<dbReference type="Pfam" id="PF00932">
    <property type="entry name" value="LTD"/>
    <property type="match status" value="1"/>
</dbReference>
<dbReference type="SMART" id="SM01391">
    <property type="entry name" value="Filament"/>
    <property type="match status" value="1"/>
</dbReference>
<dbReference type="SUPFAM" id="SSF64593">
    <property type="entry name" value="Intermediate filament protein, coiled coil region"/>
    <property type="match status" value="2"/>
</dbReference>
<dbReference type="SUPFAM" id="SSF74853">
    <property type="entry name" value="Lamin A/C globular tail domain"/>
    <property type="match status" value="1"/>
</dbReference>
<dbReference type="PROSITE" id="PS00226">
    <property type="entry name" value="IF_ROD_1"/>
    <property type="match status" value="1"/>
</dbReference>
<dbReference type="PROSITE" id="PS51842">
    <property type="entry name" value="IF_ROD_2"/>
    <property type="match status" value="1"/>
</dbReference>
<dbReference type="PROSITE" id="PS51841">
    <property type="entry name" value="LTD"/>
    <property type="match status" value="1"/>
</dbReference>
<accession>P21619</accession>
<accession>P48680</accession>
<accession>Q8CGB1</accession>
<feature type="chain" id="PRO_0000063821" description="Lamin-B2">
    <location>
        <begin position="1"/>
        <end position="593"/>
    </location>
</feature>
<feature type="propeptide" id="PRO_0000403471" description="Removed in mature form" evidence="2">
    <location>
        <begin position="594"/>
        <end position="596"/>
    </location>
</feature>
<feature type="domain" description="IF rod" evidence="6">
    <location>
        <begin position="24"/>
        <end position="380"/>
    </location>
</feature>
<feature type="domain" description="LTD" evidence="5">
    <location>
        <begin position="438"/>
        <end position="559"/>
    </location>
</feature>
<feature type="region of interest" description="Head">
    <location>
        <begin position="1"/>
        <end position="26"/>
    </location>
</feature>
<feature type="region of interest" description="Disordered" evidence="7">
    <location>
        <begin position="1"/>
        <end position="20"/>
    </location>
</feature>
<feature type="region of interest" description="Coil 1A">
    <location>
        <begin position="27"/>
        <end position="61"/>
    </location>
</feature>
<feature type="region of interest" description="Linker 1">
    <location>
        <begin position="62"/>
        <end position="73"/>
    </location>
</feature>
<feature type="region of interest" description="Coil 1B">
    <location>
        <begin position="74"/>
        <end position="207"/>
    </location>
</feature>
<feature type="region of interest" description="Linker 2">
    <location>
        <begin position="208"/>
        <end position="234"/>
    </location>
</feature>
<feature type="region of interest" description="Coil 2">
    <location>
        <begin position="235"/>
        <end position="378"/>
    </location>
</feature>
<feature type="region of interest" description="Disordered" evidence="7">
    <location>
        <begin position="376"/>
        <end position="440"/>
    </location>
</feature>
<feature type="region of interest" description="Tail">
    <location>
        <begin position="379"/>
        <end position="596"/>
    </location>
</feature>
<feature type="region of interest" description="Disordered" evidence="7">
    <location>
        <begin position="552"/>
        <end position="596"/>
    </location>
</feature>
<feature type="short sequence motif" description="Nuclear localization signal" evidence="4">
    <location>
        <begin position="415"/>
        <end position="420"/>
    </location>
</feature>
<feature type="compositionally biased region" description="Low complexity" evidence="7">
    <location>
        <begin position="382"/>
        <end position="403"/>
    </location>
</feature>
<feature type="compositionally biased region" description="Low complexity" evidence="7">
    <location>
        <begin position="425"/>
        <end position="439"/>
    </location>
</feature>
<feature type="compositionally biased region" description="Acidic residues" evidence="7">
    <location>
        <begin position="564"/>
        <end position="577"/>
    </location>
</feature>
<feature type="compositionally biased region" description="Polar residues" evidence="7">
    <location>
        <begin position="585"/>
        <end position="596"/>
    </location>
</feature>
<feature type="modified residue" description="Phosphothreonine" evidence="3">
    <location>
        <position position="12"/>
    </location>
</feature>
<feature type="modified residue" description="Phosphoserine" evidence="3">
    <location>
        <position position="15"/>
    </location>
</feature>
<feature type="modified residue" description="N6-acetyllysine; alternate" evidence="3">
    <location>
        <position position="59"/>
    </location>
</feature>
<feature type="modified residue" description="Phosphoserine" evidence="3">
    <location>
        <position position="294"/>
    </location>
</feature>
<feature type="modified residue" description="Phosphoserine" evidence="1">
    <location>
        <position position="385"/>
    </location>
</feature>
<feature type="modified residue" description="Phosphoserine" evidence="3">
    <location>
        <position position="398"/>
    </location>
</feature>
<feature type="modified residue" description="Phosphoserine" evidence="3">
    <location>
        <position position="400"/>
    </location>
</feature>
<feature type="modified residue" description="Phosphoserine" evidence="3">
    <location>
        <position position="402"/>
    </location>
</feature>
<feature type="modified residue" description="Omega-N-methylarginine" evidence="13">
    <location>
        <position position="413"/>
    </location>
</feature>
<feature type="modified residue" description="Phosphoserine" evidence="3">
    <location>
        <position position="473"/>
    </location>
</feature>
<feature type="modified residue" description="Cysteine methyl ester" evidence="2">
    <location>
        <position position="593"/>
    </location>
</feature>
<feature type="lipid moiety-binding region" description="S-farnesyl cysteine" evidence="2">
    <location>
        <position position="593"/>
    </location>
</feature>
<feature type="glycosylation site" description="O-linked (GlcNAc) threonine" evidence="3">
    <location>
        <position position="391"/>
    </location>
</feature>
<feature type="cross-link" description="Glycyl lysine isopeptide (Lys-Gly) (interchain with G-Cter in SUMO2); alternate" evidence="3">
    <location>
        <position position="59"/>
    </location>
</feature>
<feature type="cross-link" description="Glycyl lysine isopeptide (Lys-Gly) (interchain with G-Cter in SUMO2)" evidence="3">
    <location>
        <position position="173"/>
    </location>
</feature>
<feature type="cross-link" description="Glycyl lysine isopeptide (Lys-Gly) (interchain with G-Cter in SUMO2)" evidence="3">
    <location>
        <position position="233"/>
    </location>
</feature>
<feature type="cross-link" description="Glycyl lysine isopeptide (Lys-Gly) (interchain with G-Cter in SUMO2)" evidence="3">
    <location>
        <position position="465"/>
    </location>
</feature>
<feature type="splice variant" id="VSP_017070" description="In isoform B3." evidence="11">
    <original>MASLPPHAGPATPLSPTRLSRLQEKEELRELNDRLAHYIDRVRALELENDRLLLRISEKEEVTTREVSGIKTLYESELADARRVLDETARERARLQIEIGKVQAELEEARKSAKKREGELTVAQGRVKDLESLFHRSEAELATALSDKQGLETEVAELRAQLAKAEDGHAVAKKQLEKETLMRVDLENRCQSLQEELAFSKSVFEE</original>
    <variation>MGESESMRGTGEGCGRDCPEAARPLMETVEGALPELRGRPLREYVKRRPRGLGKTPVEDPVKSEGAVGYPRTWNNHLRVPTREQ</variation>
    <location>
        <begin position="1"/>
        <end position="206"/>
    </location>
</feature>
<feature type="sequence conflict" description="In Ref. 1; CAA38032." evidence="12" ref="1">
    <original>KQ</original>
    <variation>NE</variation>
    <location>
        <begin position="148"/>
        <end position="149"/>
    </location>
</feature>
<feature type="sequence conflict" description="In Ref. 6; AA sequence." evidence="12" ref="6">
    <original>H</original>
    <variation>R</variation>
    <location>
        <position position="314"/>
    </location>
</feature>
<feature type="sequence conflict" description="In Ref. 1; CAA38032." evidence="12" ref="1">
    <original>A</original>
    <variation>R</variation>
    <location>
        <position position="321"/>
    </location>
</feature>
<feature type="sequence conflict" description="In Ref. 1; CAA38032." evidence="12" ref="1">
    <original>A</original>
    <variation>R</variation>
    <location>
        <position position="344"/>
    </location>
</feature>
<feature type="sequence conflict" description="In Ref. 1; CAA38032." evidence="12" ref="1">
    <location>
        <position position="403"/>
    </location>
</feature>
<feature type="sequence conflict" description="In Ref. 1; CAA38032." evidence="12" ref="1">
    <original>GR</original>
    <variation>RG</variation>
    <location>
        <begin position="412"/>
        <end position="413"/>
    </location>
</feature>
<feature type="sequence conflict" description="In Ref. 1." evidence="12" ref="1">
    <location>
        <begin position="421"/>
        <end position="422"/>
    </location>
</feature>
<feature type="sequence conflict" description="In Ref. 1; CAA38032." evidence="12" ref="1">
    <location>
        <position position="443"/>
    </location>
</feature>
<evidence type="ECO:0000250" key="1">
    <source>
        <dbReference type="UniProtKB" id="P02545"/>
    </source>
</evidence>
<evidence type="ECO:0000250" key="2">
    <source>
        <dbReference type="UniProtKB" id="P20700"/>
    </source>
</evidence>
<evidence type="ECO:0000250" key="3">
    <source>
        <dbReference type="UniProtKB" id="Q03252"/>
    </source>
</evidence>
<evidence type="ECO:0000255" key="4"/>
<evidence type="ECO:0000255" key="5">
    <source>
        <dbReference type="PROSITE-ProRule" id="PRU01187"/>
    </source>
</evidence>
<evidence type="ECO:0000255" key="6">
    <source>
        <dbReference type="PROSITE-ProRule" id="PRU01188"/>
    </source>
</evidence>
<evidence type="ECO:0000256" key="7">
    <source>
        <dbReference type="SAM" id="MobiDB-lite"/>
    </source>
</evidence>
<evidence type="ECO:0000269" key="8">
    <source>
    </source>
</evidence>
<evidence type="ECO:0000269" key="9">
    <source>
    </source>
</evidence>
<evidence type="ECO:0000269" key="10">
    <source>
    </source>
</evidence>
<evidence type="ECO:0000303" key="11">
    <source>
    </source>
</evidence>
<evidence type="ECO:0000305" key="12"/>
<evidence type="ECO:0007744" key="13">
    <source>
    </source>
</evidence>
<proteinExistence type="evidence at protein level"/>
<gene>
    <name type="primary">Lmnb2</name>
</gene>